<accession>D2C1B0</accession>
<evidence type="ECO:0000255" key="1">
    <source>
        <dbReference type="HAMAP-Rule" id="MF_00837"/>
    </source>
</evidence>
<evidence type="ECO:0000256" key="2">
    <source>
        <dbReference type="SAM" id="MobiDB-lite"/>
    </source>
</evidence>
<evidence type="ECO:0000305" key="3"/>
<keyword id="KW-0012">Acyltransferase</keyword>
<keyword id="KW-0998">Cell outer membrane</keyword>
<keyword id="KW-0472">Membrane</keyword>
<keyword id="KW-0732">Signal</keyword>
<keyword id="KW-0808">Transferase</keyword>
<reference key="1">
    <citation type="submission" date="2009-12" db="EMBL/GenBank/DDBJ databases">
        <title>Complete sequence of Dickeya dadantii Ech586.</title>
        <authorList>
            <consortium name="US DOE Joint Genome Institute"/>
            <person name="Lucas S."/>
            <person name="Copeland A."/>
            <person name="Lapidus A."/>
            <person name="Glavina del Rio T."/>
            <person name="Tice H."/>
            <person name="Bruce D."/>
            <person name="Goodwin L."/>
            <person name="Pitluck S."/>
            <person name="Munk A.C."/>
            <person name="Brettin T."/>
            <person name="Detter J.C."/>
            <person name="Han C."/>
            <person name="Tapia R."/>
            <person name="Larimer F."/>
            <person name="Land M."/>
            <person name="Hauser L."/>
            <person name="Kyrpides N."/>
            <person name="Mikhailova N."/>
            <person name="Balakrishnan V."/>
            <person name="Glasner J."/>
            <person name="Perna N.T."/>
        </authorList>
    </citation>
    <scope>NUCLEOTIDE SEQUENCE [LARGE SCALE GENOMIC DNA]</scope>
    <source>
        <strain>Ech586</strain>
    </source>
</reference>
<comment type="function">
    <text evidence="1">Transfers a fatty acid residue from the sn-1 position of a phospholipid to the N-linked hydroxyfatty acid chain on the proximal unit of lipid A or its precursors.</text>
</comment>
<comment type="catalytic activity">
    <reaction evidence="1">
        <text>a lipid A + a 1,2-diacyl-sn-glycero-3-phosphocholine = a hepta-acyl lipid A + a 2-acyl-sn-glycero-3-phosphocholine</text>
        <dbReference type="Rhea" id="RHEA:74275"/>
        <dbReference type="ChEBI" id="CHEBI:57643"/>
        <dbReference type="ChEBI" id="CHEBI:57875"/>
        <dbReference type="ChEBI" id="CHEBI:193141"/>
        <dbReference type="ChEBI" id="CHEBI:193142"/>
        <dbReference type="EC" id="2.3.1.251"/>
    </reaction>
</comment>
<comment type="catalytic activity">
    <reaction evidence="1">
        <text>a lipid IVA + a 1,2-diacyl-sn-glycero-3-phosphocholine = a lipid IVB + a 2-acyl-sn-glycero-3-phosphocholine</text>
        <dbReference type="Rhea" id="RHEA:74279"/>
        <dbReference type="ChEBI" id="CHEBI:57643"/>
        <dbReference type="ChEBI" id="CHEBI:57875"/>
        <dbReference type="ChEBI" id="CHEBI:176425"/>
        <dbReference type="ChEBI" id="CHEBI:193143"/>
        <dbReference type="EC" id="2.3.1.251"/>
    </reaction>
</comment>
<comment type="catalytic activity">
    <reaction evidence="1">
        <text>a lipid IIA + a 1,2-diacyl-sn-glycero-3-phosphocholine = a lipid IIB + a 2-acyl-sn-glycero-3-phosphocholine</text>
        <dbReference type="Rhea" id="RHEA:74283"/>
        <dbReference type="ChEBI" id="CHEBI:57643"/>
        <dbReference type="ChEBI" id="CHEBI:57875"/>
        <dbReference type="ChEBI" id="CHEBI:193144"/>
        <dbReference type="ChEBI" id="CHEBI:193145"/>
        <dbReference type="EC" id="2.3.1.251"/>
    </reaction>
</comment>
<comment type="subunit">
    <text evidence="1">Homodimer.</text>
</comment>
<comment type="subcellular location">
    <subcellularLocation>
        <location evidence="1">Cell outer membrane</location>
    </subcellularLocation>
</comment>
<comment type="similarity">
    <text evidence="1 3">Belongs to the lipid A palmitoyltransferase family.</text>
</comment>
<proteinExistence type="inferred from homology"/>
<name>PAGP_DICZ5</name>
<feature type="signal peptide" evidence="1">
    <location>
        <begin position="1"/>
        <end position="28"/>
    </location>
</feature>
<feature type="chain" id="PRO_0000414434" description="Lipid A acyltransferase PagP">
    <location>
        <begin position="29"/>
        <end position="219"/>
    </location>
</feature>
<feature type="region of interest" description="Disordered" evidence="2">
    <location>
        <begin position="39"/>
        <end position="63"/>
    </location>
</feature>
<feature type="compositionally biased region" description="Basic and acidic residues" evidence="2">
    <location>
        <begin position="49"/>
        <end position="59"/>
    </location>
</feature>
<feature type="active site" evidence="1">
    <location>
        <position position="91"/>
    </location>
</feature>
<feature type="active site" evidence="1">
    <location>
        <position position="134"/>
    </location>
</feature>
<feature type="active site" evidence="1">
    <location>
        <position position="135"/>
    </location>
</feature>
<feature type="site" description="Role in lipopolysaccharide recognition" evidence="1">
    <location>
        <position position="100"/>
    </location>
</feature>
<feature type="site" description="Role in the phospholipid gating" evidence="1">
    <location>
        <position position="205"/>
    </location>
</feature>
<protein>
    <recommendedName>
        <fullName evidence="1">Lipid A acyltransferase PagP</fullName>
        <ecNumber evidence="1">2.3.1.251</ecNumber>
    </recommendedName>
    <alternativeName>
        <fullName evidence="1">Lipid A acylation protein</fullName>
    </alternativeName>
</protein>
<dbReference type="EC" id="2.3.1.251" evidence="1"/>
<dbReference type="EMBL" id="CP001836">
    <property type="protein sequence ID" value="ACZ75071.1"/>
    <property type="molecule type" value="Genomic_DNA"/>
</dbReference>
<dbReference type="RefSeq" id="WP_012882923.1">
    <property type="nucleotide sequence ID" value="NC_013592.1"/>
</dbReference>
<dbReference type="SMR" id="D2C1B0"/>
<dbReference type="STRING" id="590409.Dd586_0173"/>
<dbReference type="KEGG" id="ddc:Dd586_0173"/>
<dbReference type="eggNOG" id="ENOG502Z7SY">
    <property type="taxonomic scope" value="Bacteria"/>
</dbReference>
<dbReference type="HOGENOM" id="CLU_104099_0_0_6"/>
<dbReference type="OrthoDB" id="9156803at2"/>
<dbReference type="Proteomes" id="UP000001446">
    <property type="component" value="Chromosome"/>
</dbReference>
<dbReference type="GO" id="GO:0009279">
    <property type="term" value="C:cell outer membrane"/>
    <property type="evidence" value="ECO:0007669"/>
    <property type="project" value="UniProtKB-SubCell"/>
</dbReference>
<dbReference type="GO" id="GO:0016746">
    <property type="term" value="F:acyltransferase activity"/>
    <property type="evidence" value="ECO:0007669"/>
    <property type="project" value="UniProtKB-UniRule"/>
</dbReference>
<dbReference type="GO" id="GO:0009245">
    <property type="term" value="P:lipid A biosynthetic process"/>
    <property type="evidence" value="ECO:0007669"/>
    <property type="project" value="UniProtKB-UniRule"/>
</dbReference>
<dbReference type="FunFam" id="2.40.160.20:FF:000002">
    <property type="entry name" value="Lipid A palmitoyltransferase PagP"/>
    <property type="match status" value="1"/>
</dbReference>
<dbReference type="Gene3D" id="2.40.160.20">
    <property type="match status" value="1"/>
</dbReference>
<dbReference type="HAMAP" id="MF_00837">
    <property type="entry name" value="PagP_transferase"/>
    <property type="match status" value="1"/>
</dbReference>
<dbReference type="InterPro" id="IPR009746">
    <property type="entry name" value="LipidA_acyl_PagP"/>
</dbReference>
<dbReference type="InterPro" id="IPR011250">
    <property type="entry name" value="OMP/PagP_b-brl"/>
</dbReference>
<dbReference type="NCBIfam" id="NF008271">
    <property type="entry name" value="PRK11045.1"/>
    <property type="match status" value="1"/>
</dbReference>
<dbReference type="Pfam" id="PF07017">
    <property type="entry name" value="PagP"/>
    <property type="match status" value="1"/>
</dbReference>
<dbReference type="SUPFAM" id="SSF56925">
    <property type="entry name" value="OMPA-like"/>
    <property type="match status" value="1"/>
</dbReference>
<sequence>MRLILISHSRLFALSALFLIPTFDSLSAENTLTDSTTLIDRTTQSDSTTQRDSKTRRDPAPSFWQRASNNLSETWQHPQSQDLYVPAITWHNRWTYDRAKTDKYNERPWGAGFGVSRLDSDGDWHALYVMAFKDSFNKWEPIGGYGYEKRWRPLENQDIQFGLGFTAGVTMRDNWHYIPIPVLLPLASVSYQRLSFQATYIPGTYNNGNVFFAWLRWQF</sequence>
<gene>
    <name evidence="1" type="primary">pagP</name>
    <name type="ordered locus">Dd586_0173</name>
</gene>
<organism>
    <name type="scientific">Dickeya zeae (strain Ech586)</name>
    <name type="common">Dickeya dadantii (strain Ech586)</name>
    <dbReference type="NCBI Taxonomy" id="590409"/>
    <lineage>
        <taxon>Bacteria</taxon>
        <taxon>Pseudomonadati</taxon>
        <taxon>Pseudomonadota</taxon>
        <taxon>Gammaproteobacteria</taxon>
        <taxon>Enterobacterales</taxon>
        <taxon>Pectobacteriaceae</taxon>
        <taxon>Dickeya</taxon>
        <taxon>Dickeya parazeae</taxon>
    </lineage>
</organism>